<keyword id="KW-0903">Direct protein sequencing</keyword>
<keyword id="KW-1015">Disulfide bond</keyword>
<keyword id="KW-0960">Knottin</keyword>
<keyword id="KW-0611">Plant defense</keyword>
<evidence type="ECO:0000250" key="1">
    <source>
        <dbReference type="UniProtKB" id="C0HK36"/>
    </source>
</evidence>
<evidence type="ECO:0000255" key="2">
    <source>
        <dbReference type="PROSITE-ProRule" id="PRU00395"/>
    </source>
</evidence>
<evidence type="ECO:0000269" key="3">
    <source>
    </source>
</evidence>
<evidence type="ECO:0000303" key="4">
    <source>
    </source>
</evidence>
<evidence type="ECO:0000305" key="5"/>
<evidence type="ECO:0000305" key="6">
    <source>
    </source>
</evidence>
<accession>C0HK38</accession>
<comment type="function">
    <text evidence="1 2">Probably participates in a plant defense mechanism (Potential). Binds to and induces leakage in phospholipd membranes, particularly ones containing 1-palmitoyl-2-oleophosphatidylethanolamine (POPE) (By similarity).</text>
</comment>
<comment type="domain">
    <text evidence="5">The presence of a 'disulfide through disulfide knot' structurally defines this protein as a knottin.</text>
</comment>
<comment type="PTM">
    <text evidence="2">This is a cyclic peptide.</text>
</comment>
<comment type="PTM">
    <text evidence="3">Contains 3 disulfide bonds.</text>
</comment>
<comment type="mass spectrometry" mass="3217.41" method="Electrospray" evidence="3"/>
<comment type="similarity">
    <text evidence="2">Belongs to the cyclotide family. Bracelet subfamily.</text>
</comment>
<comment type="caution">
    <text evidence="2">This peptide is cyclic. The start position was chosen by similarity to Oak1 (kalata B1) for which the DNA sequence is known.</text>
</comment>
<sequence length="31" mass="3244">GSIPCGESCVYIPCISSLLGCSCKSKVCYKD</sequence>
<protein>
    <recommendedName>
        <fullName evidence="4">Cyclotide mech-4</fullName>
    </recommendedName>
</protein>
<organism evidence="4">
    <name type="scientific">Melicytus chathamicus</name>
    <name type="common">Chatham Island mahoe</name>
    <name type="synonym">Hymenanthera latifolia var. chathamica</name>
    <dbReference type="NCBI Taxonomy" id="453349"/>
    <lineage>
        <taxon>Eukaryota</taxon>
        <taxon>Viridiplantae</taxon>
        <taxon>Streptophyta</taxon>
        <taxon>Embryophyta</taxon>
        <taxon>Tracheophyta</taxon>
        <taxon>Spermatophyta</taxon>
        <taxon>Magnoliopsida</taxon>
        <taxon>eudicotyledons</taxon>
        <taxon>Gunneridae</taxon>
        <taxon>Pentapetalae</taxon>
        <taxon>rosids</taxon>
        <taxon>fabids</taxon>
        <taxon>Malpighiales</taxon>
        <taxon>Violaceae</taxon>
        <taxon>Melicytus</taxon>
    </lineage>
</organism>
<feature type="peptide" id="PRO_0000437517" description="Cyclotide mech-4" evidence="2 3">
    <location>
        <begin position="1"/>
        <end position="31"/>
    </location>
</feature>
<feature type="disulfide bond" evidence="2">
    <location>
        <begin position="5"/>
        <end position="21"/>
    </location>
</feature>
<feature type="disulfide bond" evidence="2">
    <location>
        <begin position="9"/>
        <end position="23"/>
    </location>
</feature>
<feature type="disulfide bond" evidence="2">
    <location>
        <begin position="14"/>
        <end position="28"/>
    </location>
</feature>
<feature type="cross-link" description="Cyclopeptide (Gly-Asp)" evidence="6">
    <location>
        <begin position="1"/>
        <end position="31"/>
    </location>
</feature>
<feature type="unsure residue" description="I or L" evidence="3">
    <location>
        <position position="3"/>
    </location>
</feature>
<feature type="unsure residue" description="I or L" evidence="3">
    <location>
        <position position="12"/>
    </location>
</feature>
<feature type="unsure residue" description="I or L" evidence="3">
    <location>
        <position position="15"/>
    </location>
</feature>
<feature type="unsure residue" description="L or I" evidence="3">
    <location>
        <position position="18"/>
    </location>
</feature>
<feature type="unsure residue" description="L or I" evidence="3">
    <location>
        <position position="19"/>
    </location>
</feature>
<name>CYMC4_MELCT</name>
<reference evidence="5" key="1">
    <citation type="journal article" date="2015" name="ACS Chem. Biol.">
        <title>Lysine-rich cyclotides: a new subclass of circular knotted proteins from Violaceae.</title>
        <authorList>
            <person name="Ravipati A.S."/>
            <person name="Henriques S.T."/>
            <person name="Poth A.G."/>
            <person name="Kaas Q."/>
            <person name="Wang C.K."/>
            <person name="Colgrave M.L."/>
            <person name="Craik D.J."/>
        </authorList>
    </citation>
    <scope>PROTEIN SEQUENCE</scope>
    <scope>MASS SPECTROMETRY</scope>
    <scope>IDENTIFICATION BY MASS SPECTROMETRY</scope>
    <scope>PRESENCE OF DISULFIDE BONDS</scope>
</reference>
<dbReference type="SMR" id="C0HK38"/>
<dbReference type="GO" id="GO:0006952">
    <property type="term" value="P:defense response"/>
    <property type="evidence" value="ECO:0007669"/>
    <property type="project" value="UniProtKB-KW"/>
</dbReference>
<dbReference type="InterPro" id="IPR005535">
    <property type="entry name" value="Cyclotide"/>
</dbReference>
<dbReference type="InterPro" id="IPR012323">
    <property type="entry name" value="Cyclotide_bracelet_CS"/>
</dbReference>
<dbReference type="InterPro" id="IPR036146">
    <property type="entry name" value="Cyclotide_sf"/>
</dbReference>
<dbReference type="Pfam" id="PF03784">
    <property type="entry name" value="Cyclotide"/>
    <property type="match status" value="1"/>
</dbReference>
<dbReference type="PIRSF" id="PIRSF037891">
    <property type="entry name" value="Cycloviolacin"/>
    <property type="match status" value="1"/>
</dbReference>
<dbReference type="SUPFAM" id="SSF57038">
    <property type="entry name" value="Cyclotides"/>
    <property type="match status" value="1"/>
</dbReference>
<dbReference type="PROSITE" id="PS51052">
    <property type="entry name" value="CYCLOTIDE"/>
    <property type="match status" value="1"/>
</dbReference>
<dbReference type="PROSITE" id="PS60008">
    <property type="entry name" value="CYCLOTIDE_BRACELET"/>
    <property type="match status" value="1"/>
</dbReference>
<proteinExistence type="evidence at protein level"/>